<comment type="function">
    <text evidence="1">Located at the top of the head of the 30S subunit, it contacts several helices of the 16S rRNA. In the 70S ribosome it contacts the 23S rRNA (bridge B1a) and protein L5 of the 50S subunit (bridge B1b), connecting the 2 subunits; these bridges are implicated in subunit movement. Contacts the tRNAs in the A and P-sites.</text>
</comment>
<comment type="subunit">
    <text evidence="1">Part of the 30S ribosomal subunit. Forms a loose heterodimer with protein S19. Forms two bridges to the 50S subunit in the 70S ribosome.</text>
</comment>
<comment type="similarity">
    <text evidence="1">Belongs to the universal ribosomal protein uS13 family.</text>
</comment>
<sequence length="124" mass="14340">MARIAGVDLPREKRVEIALTYIFGIGLSRSKQILRDTGVDPNKRVKDLTDDEVAKIRDYIDKNFKVEGELRAEIARNIKRLIDIRCYRGLRHLRGLPVRGQRTRTNARTRKGPRKTVGVMRKKS</sequence>
<keyword id="KW-0687">Ribonucleoprotein</keyword>
<keyword id="KW-0689">Ribosomal protein</keyword>
<keyword id="KW-0694">RNA-binding</keyword>
<keyword id="KW-0699">rRNA-binding</keyword>
<keyword id="KW-0820">tRNA-binding</keyword>
<gene>
    <name evidence="1" type="primary">rpsM</name>
    <name type="ordered locus">Athe_1720</name>
</gene>
<name>RS13_CALBD</name>
<reference key="1">
    <citation type="submission" date="2009-01" db="EMBL/GenBank/DDBJ databases">
        <title>Complete sequence of chromosome of Caldicellulosiruptor becscii DSM 6725.</title>
        <authorList>
            <person name="Lucas S."/>
            <person name="Copeland A."/>
            <person name="Lapidus A."/>
            <person name="Glavina del Rio T."/>
            <person name="Tice H."/>
            <person name="Bruce D."/>
            <person name="Goodwin L."/>
            <person name="Pitluck S."/>
            <person name="Sims D."/>
            <person name="Meincke L."/>
            <person name="Brettin T."/>
            <person name="Detter J.C."/>
            <person name="Han C."/>
            <person name="Larimer F."/>
            <person name="Land M."/>
            <person name="Hauser L."/>
            <person name="Kyrpides N."/>
            <person name="Ovchinnikova G."/>
            <person name="Kataeva I."/>
            <person name="Adams M.W.W."/>
        </authorList>
    </citation>
    <scope>NUCLEOTIDE SEQUENCE [LARGE SCALE GENOMIC DNA]</scope>
    <source>
        <strain>ATCC BAA-1888 / DSM 6725 / KCTC 15123 / Z-1320</strain>
    </source>
</reference>
<protein>
    <recommendedName>
        <fullName evidence="1">Small ribosomal subunit protein uS13</fullName>
    </recommendedName>
    <alternativeName>
        <fullName evidence="3">30S ribosomal protein S13</fullName>
    </alternativeName>
</protein>
<dbReference type="EMBL" id="CP001393">
    <property type="protein sequence ID" value="ACM60814.1"/>
    <property type="molecule type" value="Genomic_DNA"/>
</dbReference>
<dbReference type="RefSeq" id="WP_013290174.1">
    <property type="nucleotide sequence ID" value="NC_012034.1"/>
</dbReference>
<dbReference type="SMR" id="B9MKF6"/>
<dbReference type="STRING" id="521460.Athe_1720"/>
<dbReference type="GeneID" id="31773077"/>
<dbReference type="KEGG" id="ate:Athe_1720"/>
<dbReference type="eggNOG" id="COG0099">
    <property type="taxonomic scope" value="Bacteria"/>
</dbReference>
<dbReference type="HOGENOM" id="CLU_103849_1_2_9"/>
<dbReference type="Proteomes" id="UP000007723">
    <property type="component" value="Chromosome"/>
</dbReference>
<dbReference type="GO" id="GO:0005829">
    <property type="term" value="C:cytosol"/>
    <property type="evidence" value="ECO:0007669"/>
    <property type="project" value="TreeGrafter"/>
</dbReference>
<dbReference type="GO" id="GO:0015935">
    <property type="term" value="C:small ribosomal subunit"/>
    <property type="evidence" value="ECO:0007669"/>
    <property type="project" value="TreeGrafter"/>
</dbReference>
<dbReference type="GO" id="GO:0019843">
    <property type="term" value="F:rRNA binding"/>
    <property type="evidence" value="ECO:0007669"/>
    <property type="project" value="UniProtKB-UniRule"/>
</dbReference>
<dbReference type="GO" id="GO:0003735">
    <property type="term" value="F:structural constituent of ribosome"/>
    <property type="evidence" value="ECO:0007669"/>
    <property type="project" value="InterPro"/>
</dbReference>
<dbReference type="GO" id="GO:0000049">
    <property type="term" value="F:tRNA binding"/>
    <property type="evidence" value="ECO:0007669"/>
    <property type="project" value="UniProtKB-UniRule"/>
</dbReference>
<dbReference type="GO" id="GO:0006412">
    <property type="term" value="P:translation"/>
    <property type="evidence" value="ECO:0007669"/>
    <property type="project" value="UniProtKB-UniRule"/>
</dbReference>
<dbReference type="FunFam" id="1.10.8.50:FF:000001">
    <property type="entry name" value="30S ribosomal protein S13"/>
    <property type="match status" value="1"/>
</dbReference>
<dbReference type="FunFam" id="4.10.910.10:FF:000001">
    <property type="entry name" value="30S ribosomal protein S13"/>
    <property type="match status" value="1"/>
</dbReference>
<dbReference type="Gene3D" id="1.10.8.50">
    <property type="match status" value="1"/>
</dbReference>
<dbReference type="Gene3D" id="4.10.910.10">
    <property type="entry name" value="30s ribosomal protein s13, domain 2"/>
    <property type="match status" value="1"/>
</dbReference>
<dbReference type="HAMAP" id="MF_01315">
    <property type="entry name" value="Ribosomal_uS13"/>
    <property type="match status" value="1"/>
</dbReference>
<dbReference type="InterPro" id="IPR027437">
    <property type="entry name" value="Rbsml_uS13_C"/>
</dbReference>
<dbReference type="InterPro" id="IPR001892">
    <property type="entry name" value="Ribosomal_uS13"/>
</dbReference>
<dbReference type="InterPro" id="IPR010979">
    <property type="entry name" value="Ribosomal_uS13-like_H2TH"/>
</dbReference>
<dbReference type="InterPro" id="IPR019980">
    <property type="entry name" value="Ribosomal_uS13_bac-type"/>
</dbReference>
<dbReference type="InterPro" id="IPR018269">
    <property type="entry name" value="Ribosomal_uS13_CS"/>
</dbReference>
<dbReference type="NCBIfam" id="TIGR03631">
    <property type="entry name" value="uS13_bact"/>
    <property type="match status" value="1"/>
</dbReference>
<dbReference type="PANTHER" id="PTHR10871">
    <property type="entry name" value="30S RIBOSOMAL PROTEIN S13/40S RIBOSOMAL PROTEIN S18"/>
    <property type="match status" value="1"/>
</dbReference>
<dbReference type="PANTHER" id="PTHR10871:SF1">
    <property type="entry name" value="SMALL RIBOSOMAL SUBUNIT PROTEIN US13M"/>
    <property type="match status" value="1"/>
</dbReference>
<dbReference type="Pfam" id="PF00416">
    <property type="entry name" value="Ribosomal_S13"/>
    <property type="match status" value="1"/>
</dbReference>
<dbReference type="PIRSF" id="PIRSF002134">
    <property type="entry name" value="Ribosomal_S13"/>
    <property type="match status" value="1"/>
</dbReference>
<dbReference type="SUPFAM" id="SSF46946">
    <property type="entry name" value="S13-like H2TH domain"/>
    <property type="match status" value="1"/>
</dbReference>
<dbReference type="PROSITE" id="PS00646">
    <property type="entry name" value="RIBOSOMAL_S13_1"/>
    <property type="match status" value="1"/>
</dbReference>
<dbReference type="PROSITE" id="PS50159">
    <property type="entry name" value="RIBOSOMAL_S13_2"/>
    <property type="match status" value="1"/>
</dbReference>
<organism>
    <name type="scientific">Caldicellulosiruptor bescii (strain ATCC BAA-1888 / DSM 6725 / KCTC 15123 / Z-1320)</name>
    <name type="common">Anaerocellum thermophilum</name>
    <dbReference type="NCBI Taxonomy" id="521460"/>
    <lineage>
        <taxon>Bacteria</taxon>
        <taxon>Bacillati</taxon>
        <taxon>Bacillota</taxon>
        <taxon>Bacillota incertae sedis</taxon>
        <taxon>Caldicellulosiruptorales</taxon>
        <taxon>Caldicellulosiruptoraceae</taxon>
        <taxon>Caldicellulosiruptor</taxon>
    </lineage>
</organism>
<proteinExistence type="inferred from homology"/>
<feature type="chain" id="PRO_1000165596" description="Small ribosomal subunit protein uS13">
    <location>
        <begin position="1"/>
        <end position="124"/>
    </location>
</feature>
<feature type="region of interest" description="Disordered" evidence="2">
    <location>
        <begin position="99"/>
        <end position="124"/>
    </location>
</feature>
<feature type="compositionally biased region" description="Basic residues" evidence="2">
    <location>
        <begin position="101"/>
        <end position="124"/>
    </location>
</feature>
<accession>B9MKF6</accession>
<evidence type="ECO:0000255" key="1">
    <source>
        <dbReference type="HAMAP-Rule" id="MF_01315"/>
    </source>
</evidence>
<evidence type="ECO:0000256" key="2">
    <source>
        <dbReference type="SAM" id="MobiDB-lite"/>
    </source>
</evidence>
<evidence type="ECO:0000305" key="3"/>